<reference key="1">
    <citation type="journal article" date="2002" name="Plant Physiol.">
        <title>The LATERAL ORGAN BOUNDARIES gene defines a novel, plant-specific gene family.</title>
        <authorList>
            <person name="Shuai B."/>
            <person name="Reynaga-Pena C.G."/>
            <person name="Springer P.S."/>
        </authorList>
    </citation>
    <scope>NUCLEOTIDE SEQUENCE [MRNA]</scope>
    <scope>TISSUE SPECIFICITY</scope>
    <scope>GENE FAMILY</scope>
    <scope>NOMENCLATURE</scope>
    <source>
        <strain>cv. Columbia</strain>
    </source>
</reference>
<reference key="2">
    <citation type="journal article" date="2009" name="Plant J.">
        <title>Characterization of genes in the ASYMMETRIC LEAVES2/LATERAL ORGAN BOUNDARIES (AS2/LOB) family in Arabidopsis thaliana, and functional and molecular comparisons between AS2 and other family members.</title>
        <authorList>
            <person name="Matsumura Y."/>
            <person name="Iwakawa H."/>
            <person name="Machida Y."/>
            <person name="Machida C."/>
        </authorList>
    </citation>
    <scope>NUCLEOTIDE SEQUENCE [MRNA]</scope>
    <source>
        <strain>cv. Columbia</strain>
    </source>
</reference>
<reference key="3">
    <citation type="journal article" date="1999" name="Nature">
        <title>Sequence and analysis of chromosome 2 of the plant Arabidopsis thaliana.</title>
        <authorList>
            <person name="Lin X."/>
            <person name="Kaul S."/>
            <person name="Rounsley S.D."/>
            <person name="Shea T.P."/>
            <person name="Benito M.-I."/>
            <person name="Town C.D."/>
            <person name="Fujii C.Y."/>
            <person name="Mason T.M."/>
            <person name="Bowman C.L."/>
            <person name="Barnstead M.E."/>
            <person name="Feldblyum T.V."/>
            <person name="Buell C.R."/>
            <person name="Ketchum K.A."/>
            <person name="Lee J.J."/>
            <person name="Ronning C.M."/>
            <person name="Koo H.L."/>
            <person name="Moffat K.S."/>
            <person name="Cronin L.A."/>
            <person name="Shen M."/>
            <person name="Pai G."/>
            <person name="Van Aken S."/>
            <person name="Umayam L."/>
            <person name="Tallon L.J."/>
            <person name="Gill J.E."/>
            <person name="Adams M.D."/>
            <person name="Carrera A.J."/>
            <person name="Creasy T.H."/>
            <person name="Goodman H.M."/>
            <person name="Somerville C.R."/>
            <person name="Copenhaver G.P."/>
            <person name="Preuss D."/>
            <person name="Nierman W.C."/>
            <person name="White O."/>
            <person name="Eisen J.A."/>
            <person name="Salzberg S.L."/>
            <person name="Fraser C.M."/>
            <person name="Venter J.C."/>
        </authorList>
    </citation>
    <scope>NUCLEOTIDE SEQUENCE [LARGE SCALE GENOMIC DNA]</scope>
    <source>
        <strain>cv. Columbia</strain>
    </source>
</reference>
<reference key="4">
    <citation type="journal article" date="2017" name="Plant J.">
        <title>Araport11: a complete reannotation of the Arabidopsis thaliana reference genome.</title>
        <authorList>
            <person name="Cheng C.Y."/>
            <person name="Krishnakumar V."/>
            <person name="Chan A.P."/>
            <person name="Thibaud-Nissen F."/>
            <person name="Schobel S."/>
            <person name="Town C.D."/>
        </authorList>
    </citation>
    <scope>GENOME REANNOTATION</scope>
    <source>
        <strain>cv. Columbia</strain>
    </source>
</reference>
<reference key="5">
    <citation type="submission" date="2006-07" db="EMBL/GenBank/DDBJ databases">
        <title>Arabidopsis ORF clones.</title>
        <authorList>
            <person name="Quinitio C."/>
            <person name="Chen H."/>
            <person name="Kim C.J."/>
            <person name="Shinn P."/>
            <person name="Ecker J.R."/>
        </authorList>
    </citation>
    <scope>NUCLEOTIDE SEQUENCE [LARGE SCALE MRNA]</scope>
    <source>
        <strain>cv. Columbia</strain>
    </source>
</reference>
<reference key="6">
    <citation type="journal article" date="2002" name="Plant Physiol.">
        <title>Cloning and sequencing of cDNAs for hypothetical genes from chromosome 2 of Arabidopsis.</title>
        <authorList>
            <person name="Xiao Y.-L."/>
            <person name="Malik M."/>
            <person name="Whitelaw C.A."/>
            <person name="Town C.D."/>
        </authorList>
    </citation>
    <scope>NUCLEOTIDE SEQUENCE [LARGE SCALE MRNA] OF 44-268</scope>
    <source>
        <strain>cv. Columbia</strain>
        <tissue>Root</tissue>
    </source>
</reference>
<reference key="7">
    <citation type="journal article" date="2002" name="Plant Cell Physiol.">
        <title>The ASYMMETRIC LEAVES2 gene of Arabidopsis thaliana, required for formation of a symmetric flat leaf lamina, encodes a member of a novel family of proteins characterized by cysteine repeats and a leucine zipper.</title>
        <authorList>
            <person name="Iwakawa H."/>
            <person name="Ueno Y."/>
            <person name="Semiarti E."/>
            <person name="Onouchi H."/>
            <person name="Kojima S."/>
            <person name="Tsukaya H."/>
            <person name="Hasebe M."/>
            <person name="Soma T."/>
            <person name="Ikezaki M."/>
            <person name="Machida C."/>
            <person name="Machida Y."/>
        </authorList>
    </citation>
    <scope>GENE FAMILY</scope>
    <scope>NOMENCLATURE</scope>
</reference>
<dbReference type="EMBL" id="AF447888">
    <property type="protein sequence ID" value="AAL38033.1"/>
    <property type="molecule type" value="mRNA"/>
</dbReference>
<dbReference type="EMBL" id="AB473843">
    <property type="protein sequence ID" value="BAH10554.1"/>
    <property type="molecule type" value="mRNA"/>
</dbReference>
<dbReference type="EMBL" id="AC002338">
    <property type="protein sequence ID" value="AAC16936.2"/>
    <property type="molecule type" value="Genomic_DNA"/>
</dbReference>
<dbReference type="EMBL" id="CP002685">
    <property type="protein sequence ID" value="AEC08372.1"/>
    <property type="molecule type" value="Genomic_DNA"/>
</dbReference>
<dbReference type="EMBL" id="BT026052">
    <property type="protein sequence ID" value="ABG48408.1"/>
    <property type="molecule type" value="mRNA"/>
</dbReference>
<dbReference type="EMBL" id="AF345338">
    <property type="protein sequence ID" value="AAK31142.1"/>
    <property type="status" value="ALT_INIT"/>
    <property type="molecule type" value="mRNA"/>
</dbReference>
<dbReference type="PIR" id="C84707">
    <property type="entry name" value="C84707"/>
</dbReference>
<dbReference type="RefSeq" id="NP_850141.1">
    <property type="nucleotide sequence ID" value="NM_179810.3"/>
</dbReference>
<dbReference type="SMR" id="Q9AT61"/>
<dbReference type="BioGRID" id="2933">
    <property type="interactions" value="9"/>
</dbReference>
<dbReference type="IntAct" id="Q9AT61">
    <property type="interactions" value="9"/>
</dbReference>
<dbReference type="STRING" id="3702.Q9AT61"/>
<dbReference type="GlyGen" id="Q9AT61">
    <property type="glycosylation" value="2 sites"/>
</dbReference>
<dbReference type="PaxDb" id="3702-AT2G30340.1"/>
<dbReference type="ProteomicsDB" id="250731"/>
<dbReference type="EnsemblPlants" id="AT2G30340.1">
    <property type="protein sequence ID" value="AT2G30340.1"/>
    <property type="gene ID" value="AT2G30340"/>
</dbReference>
<dbReference type="GeneID" id="817584"/>
<dbReference type="Gramene" id="AT2G30340.1">
    <property type="protein sequence ID" value="AT2G30340.1"/>
    <property type="gene ID" value="AT2G30340"/>
</dbReference>
<dbReference type="KEGG" id="ath:AT2G30340"/>
<dbReference type="Araport" id="AT2G30340"/>
<dbReference type="TAIR" id="AT2G30340">
    <property type="gene designation" value="LBD13"/>
</dbReference>
<dbReference type="eggNOG" id="ENOG502R7NZ">
    <property type="taxonomic scope" value="Eukaryota"/>
</dbReference>
<dbReference type="HOGENOM" id="CLU_058353_0_0_1"/>
<dbReference type="InParanoid" id="Q9AT61"/>
<dbReference type="OMA" id="ANSMVYE"/>
<dbReference type="OrthoDB" id="1927167at2759"/>
<dbReference type="PhylomeDB" id="Q9AT61"/>
<dbReference type="PRO" id="PR:Q9AT61"/>
<dbReference type="Proteomes" id="UP000006548">
    <property type="component" value="Chromosome 2"/>
</dbReference>
<dbReference type="ExpressionAtlas" id="Q9AT61">
    <property type="expression patterns" value="baseline and differential"/>
</dbReference>
<dbReference type="GO" id="GO:0005634">
    <property type="term" value="C:nucleus"/>
    <property type="evidence" value="ECO:0000314"/>
    <property type="project" value="TAIR"/>
</dbReference>
<dbReference type="GO" id="GO:0010311">
    <property type="term" value="P:lateral root formation"/>
    <property type="evidence" value="ECO:0000315"/>
    <property type="project" value="TAIR"/>
</dbReference>
<dbReference type="GO" id="GO:0045893">
    <property type="term" value="P:positive regulation of DNA-templated transcription"/>
    <property type="evidence" value="ECO:0000314"/>
    <property type="project" value="TAIR"/>
</dbReference>
<dbReference type="InterPro" id="IPR004883">
    <property type="entry name" value="LOB"/>
</dbReference>
<dbReference type="PANTHER" id="PTHR31301:SF78">
    <property type="entry name" value="LOB DOMAIN-CONTAINING PROTEIN 13"/>
    <property type="match status" value="1"/>
</dbReference>
<dbReference type="PANTHER" id="PTHR31301">
    <property type="entry name" value="LOB DOMAIN-CONTAINING PROTEIN 4-RELATED"/>
    <property type="match status" value="1"/>
</dbReference>
<dbReference type="Pfam" id="PF03195">
    <property type="entry name" value="LOB"/>
    <property type="match status" value="1"/>
</dbReference>
<dbReference type="PROSITE" id="PS50891">
    <property type="entry name" value="LOB"/>
    <property type="match status" value="1"/>
</dbReference>
<accession>Q9AT61</accession>
<accession>B7XG64</accession>
<accession>O22930</accession>
<accession>Q147P1</accession>
<accession>Q8W1D8</accession>
<sequence>MSREREGFGEYYETVKKIKKDPAFETTTDHAVMGIRRHVAVPPGTTLNTVTPCAACKLLRRRCAEECPFSPYFSPHEPHKFAAVHKVFGASNVSKMLLEVGESQRGDAANSLVYEANLRLRDPIYGCMGAISALQHHIQSLQSELTTVRTEILRHKYQEATTITSLQNNFNSTTTTSSVSCDQHALASAILLPPPPPPPPTPRPPRLLSSQPAPPPTPPVSLPSPSMVVSSSSSSNSSATNSMYNPPPSSTAGYSNSLSSDNNVHYFD</sequence>
<comment type="interaction">
    <interactant intactId="EBI-4432427">
        <id>Q9AT61</id>
    </interactant>
    <interactant intactId="EBI-1798250">
        <id>Q39011</id>
        <label>ASK7</label>
    </interactant>
    <organismsDiffer>false</organismsDiffer>
    <experiments>3</experiments>
</comment>
<comment type="interaction">
    <interactant intactId="EBI-4432427">
        <id>Q9AT61</id>
    </interactant>
    <interactant intactId="EBI-4446727">
        <id>Q94ID6</id>
        <label>ERF12</label>
    </interactant>
    <organismsDiffer>false</organismsDiffer>
    <experiments>5</experiments>
</comment>
<comment type="interaction">
    <interactant intactId="EBI-4432427">
        <id>Q9AT61</id>
    </interactant>
    <interactant intactId="EBI-15198991">
        <id>Q8LBW3</id>
        <label>LBD12</label>
    </interactant>
    <organismsDiffer>false</organismsDiffer>
    <experiments>3</experiments>
</comment>
<comment type="interaction">
    <interactant intactId="EBI-4432427">
        <id>Q9AT61</id>
    </interactant>
    <interactant intactId="EBI-4445715">
        <id>Q9SHE9</id>
        <label>LBD4</label>
    </interactant>
    <organismsDiffer>false</organismsDiffer>
    <experiments>4</experiments>
</comment>
<comment type="interaction">
    <interactant intactId="EBI-4432427">
        <id>Q9AT61</id>
    </interactant>
    <interactant intactId="EBI-15194891">
        <id>Q9FML4</id>
        <label>LOB</label>
    </interactant>
    <organismsDiffer>false</organismsDiffer>
    <experiments>3</experiments>
</comment>
<comment type="tissue specificity">
    <text evidence="3">Expressed in shoots and roots and at low levels in flowers, but not in leaves or inflorescence stems.</text>
</comment>
<comment type="similarity">
    <text evidence="4">Belongs to the LOB domain-containing protein family.</text>
</comment>
<comment type="caution">
    <text evidence="4">It is uncertain whether Met-1 or Met-33 is the initiator.</text>
</comment>
<comment type="sequence caution" evidence="4">
    <conflict type="erroneous initiation">
        <sequence resource="EMBL-CDS" id="AAK31142"/>
    </conflict>
</comment>
<gene>
    <name type="primary">LBD13</name>
    <name type="synonym">ASL10</name>
    <name type="ordered locus">At2g30340</name>
    <name type="ORF">T9D9.15</name>
</gene>
<keyword id="KW-1185">Reference proteome</keyword>
<evidence type="ECO:0000255" key="1">
    <source>
        <dbReference type="PROSITE-ProRule" id="PRU00291"/>
    </source>
</evidence>
<evidence type="ECO:0000256" key="2">
    <source>
        <dbReference type="SAM" id="MobiDB-lite"/>
    </source>
</evidence>
<evidence type="ECO:0000269" key="3">
    <source>
    </source>
</evidence>
<evidence type="ECO:0000305" key="4"/>
<proteinExistence type="evidence at protein level"/>
<feature type="chain" id="PRO_0000132264" description="LOB domain-containing protein 13">
    <location>
        <begin position="1"/>
        <end position="268"/>
    </location>
</feature>
<feature type="domain" description="LOB" evidence="1">
    <location>
        <begin position="51"/>
        <end position="152"/>
    </location>
</feature>
<feature type="region of interest" description="Disordered" evidence="2">
    <location>
        <begin position="191"/>
        <end position="268"/>
    </location>
</feature>
<feature type="compositionally biased region" description="Pro residues" evidence="2">
    <location>
        <begin position="192"/>
        <end position="205"/>
    </location>
</feature>
<feature type="compositionally biased region" description="Pro residues" evidence="2">
    <location>
        <begin position="212"/>
        <end position="222"/>
    </location>
</feature>
<feature type="compositionally biased region" description="Low complexity" evidence="2">
    <location>
        <begin position="223"/>
        <end position="243"/>
    </location>
</feature>
<feature type="compositionally biased region" description="Polar residues" evidence="2">
    <location>
        <begin position="250"/>
        <end position="268"/>
    </location>
</feature>
<organism>
    <name type="scientific">Arabidopsis thaliana</name>
    <name type="common">Mouse-ear cress</name>
    <dbReference type="NCBI Taxonomy" id="3702"/>
    <lineage>
        <taxon>Eukaryota</taxon>
        <taxon>Viridiplantae</taxon>
        <taxon>Streptophyta</taxon>
        <taxon>Embryophyta</taxon>
        <taxon>Tracheophyta</taxon>
        <taxon>Spermatophyta</taxon>
        <taxon>Magnoliopsida</taxon>
        <taxon>eudicotyledons</taxon>
        <taxon>Gunneridae</taxon>
        <taxon>Pentapetalae</taxon>
        <taxon>rosids</taxon>
        <taxon>malvids</taxon>
        <taxon>Brassicales</taxon>
        <taxon>Brassicaceae</taxon>
        <taxon>Camelineae</taxon>
        <taxon>Arabidopsis</taxon>
    </lineage>
</organism>
<protein>
    <recommendedName>
        <fullName>LOB domain-containing protein 13</fullName>
    </recommendedName>
    <alternativeName>
        <fullName>ASYMMETRIC LEAVES 2-like protein 10</fullName>
        <shortName>AS2-like protein 10</shortName>
    </alternativeName>
</protein>
<name>LBD13_ARATH</name>